<accession>Q81M99</accession>
<accession>Q6HTQ2</accession>
<accession>Q6KMZ0</accession>
<feature type="chain" id="PRO_0000112875" description="Ornithine carbamoyltransferase">
    <location>
        <begin position="1"/>
        <end position="316"/>
    </location>
</feature>
<feature type="binding site" evidence="2 4">
    <location>
        <begin position="57"/>
        <end position="60"/>
    </location>
    <ligand>
        <name>carbamoyl phosphate</name>
        <dbReference type="ChEBI" id="CHEBI:58228"/>
    </ligand>
</feature>
<feature type="binding site" evidence="2 4">
    <location>
        <position position="84"/>
    </location>
    <ligand>
        <name>carbamoyl phosphate</name>
        <dbReference type="ChEBI" id="CHEBI:58228"/>
    </ligand>
</feature>
<feature type="binding site" evidence="2 4">
    <location>
        <position position="108"/>
    </location>
    <ligand>
        <name>carbamoyl phosphate</name>
        <dbReference type="ChEBI" id="CHEBI:58228"/>
    </ligand>
</feature>
<feature type="binding site" evidence="2 4">
    <location>
        <begin position="135"/>
        <end position="138"/>
    </location>
    <ligand>
        <name>carbamoyl phosphate</name>
        <dbReference type="ChEBI" id="CHEBI:58228"/>
    </ligand>
</feature>
<feature type="binding site" evidence="2 4">
    <location>
        <position position="166"/>
    </location>
    <ligand>
        <name>L-ornithine</name>
        <dbReference type="ChEBI" id="CHEBI:46911"/>
    </ligand>
</feature>
<feature type="binding site" evidence="2 4">
    <location>
        <position position="230"/>
    </location>
    <ligand>
        <name>L-ornithine</name>
        <dbReference type="ChEBI" id="CHEBI:46911"/>
    </ligand>
</feature>
<feature type="binding site" evidence="2 4">
    <location>
        <begin position="234"/>
        <end position="235"/>
    </location>
    <ligand>
        <name>L-ornithine</name>
        <dbReference type="ChEBI" id="CHEBI:46911"/>
    </ligand>
</feature>
<feature type="binding site" evidence="2 4">
    <location>
        <begin position="269"/>
        <end position="270"/>
    </location>
    <ligand>
        <name>carbamoyl phosphate</name>
        <dbReference type="ChEBI" id="CHEBI:58228"/>
    </ligand>
</feature>
<feature type="binding site" evidence="2 4">
    <location>
        <position position="297"/>
    </location>
    <ligand>
        <name>carbamoyl phosphate</name>
        <dbReference type="ChEBI" id="CHEBI:58228"/>
    </ligand>
</feature>
<feature type="strand" evidence="5">
    <location>
        <begin position="14"/>
        <end position="17"/>
    </location>
</feature>
<feature type="helix" evidence="5">
    <location>
        <begin position="22"/>
        <end position="37"/>
    </location>
</feature>
<feature type="turn" evidence="5">
    <location>
        <begin position="43"/>
        <end position="46"/>
    </location>
</feature>
<feature type="strand" evidence="5">
    <location>
        <begin position="48"/>
        <end position="55"/>
    </location>
</feature>
<feature type="helix" evidence="5">
    <location>
        <begin position="59"/>
        <end position="70"/>
    </location>
</feature>
<feature type="strand" evidence="5">
    <location>
        <begin position="74"/>
        <end position="79"/>
    </location>
</feature>
<feature type="helix" evidence="5">
    <location>
        <begin position="80"/>
        <end position="82"/>
    </location>
</feature>
<feature type="helix" evidence="5">
    <location>
        <begin position="84"/>
        <end position="87"/>
    </location>
</feature>
<feature type="helix" evidence="5">
    <location>
        <begin position="91"/>
        <end position="98"/>
    </location>
</feature>
<feature type="turn" evidence="5">
    <location>
        <begin position="99"/>
        <end position="101"/>
    </location>
</feature>
<feature type="strand" evidence="5">
    <location>
        <begin position="103"/>
        <end position="108"/>
    </location>
</feature>
<feature type="helix" evidence="5">
    <location>
        <begin position="112"/>
        <end position="121"/>
    </location>
</feature>
<feature type="strand" evidence="5">
    <location>
        <begin position="126"/>
        <end position="129"/>
    </location>
</feature>
<feature type="helix" evidence="5">
    <location>
        <begin position="136"/>
        <end position="150"/>
    </location>
</feature>
<feature type="strand" evidence="5">
    <location>
        <begin position="157"/>
        <end position="162"/>
    </location>
</feature>
<feature type="helix" evidence="5">
    <location>
        <begin position="166"/>
        <end position="178"/>
    </location>
</feature>
<feature type="strand" evidence="5">
    <location>
        <begin position="181"/>
        <end position="185"/>
    </location>
</feature>
<feature type="helix" evidence="5">
    <location>
        <begin position="194"/>
        <end position="207"/>
    </location>
</feature>
<feature type="strand" evidence="5">
    <location>
        <begin position="211"/>
        <end position="215"/>
    </location>
</feature>
<feature type="helix" evidence="5">
    <location>
        <begin position="217"/>
        <end position="221"/>
    </location>
</feature>
<feature type="strand" evidence="5">
    <location>
        <begin position="225"/>
        <end position="229"/>
    </location>
</feature>
<feature type="helix" evidence="5">
    <location>
        <begin position="241"/>
        <end position="247"/>
    </location>
</feature>
<feature type="helix" evidence="5">
    <location>
        <begin position="248"/>
        <end position="250"/>
    </location>
</feature>
<feature type="helix" evidence="5">
    <location>
        <begin position="254"/>
        <end position="257"/>
    </location>
</feature>
<feature type="strand" evidence="5">
    <location>
        <begin position="265"/>
        <end position="268"/>
    </location>
</feature>
<feature type="turn" evidence="5">
    <location>
        <begin position="275"/>
        <end position="277"/>
    </location>
</feature>
<feature type="helix" evidence="5">
    <location>
        <begin position="280"/>
        <end position="283"/>
    </location>
</feature>
<feature type="helix" evidence="5">
    <location>
        <begin position="290"/>
        <end position="310"/>
    </location>
</feature>
<comment type="function">
    <text evidence="1">Reversibly catalyzes the transfer of the carbamoyl group from carbamoyl phosphate (CP) to the N(epsilon) atom of ornithine (ORN) to produce L-citrulline.</text>
</comment>
<comment type="catalytic activity">
    <reaction evidence="1">
        <text>carbamoyl phosphate + L-ornithine = L-citrulline + phosphate + H(+)</text>
        <dbReference type="Rhea" id="RHEA:19513"/>
        <dbReference type="ChEBI" id="CHEBI:15378"/>
        <dbReference type="ChEBI" id="CHEBI:43474"/>
        <dbReference type="ChEBI" id="CHEBI:46911"/>
        <dbReference type="ChEBI" id="CHEBI:57743"/>
        <dbReference type="ChEBI" id="CHEBI:58228"/>
        <dbReference type="EC" id="2.1.3.3"/>
    </reaction>
</comment>
<comment type="pathway">
    <text evidence="1">Amino-acid biosynthesis; L-arginine biosynthesis; L-arginine from L-ornithine and carbamoyl phosphate: step 1/3.</text>
</comment>
<comment type="subunit">
    <text evidence="3">Homotrimer.</text>
</comment>
<comment type="subcellular location">
    <subcellularLocation>
        <location evidence="1">Cytoplasm</location>
    </subcellularLocation>
</comment>
<comment type="similarity">
    <text evidence="1">Belongs to the aspartate/ornithine carbamoyltransferase superfamily. OTCase family.</text>
</comment>
<proteinExistence type="evidence at protein level"/>
<name>OTC_BACAN</name>
<evidence type="ECO:0000255" key="1">
    <source>
        <dbReference type="HAMAP-Rule" id="MF_01109"/>
    </source>
</evidence>
<evidence type="ECO:0000269" key="2">
    <source ref="5"/>
</evidence>
<evidence type="ECO:0000305" key="3">
    <source ref="5"/>
</evidence>
<evidence type="ECO:0007744" key="4">
    <source>
        <dbReference type="PDB" id="4NF2"/>
    </source>
</evidence>
<evidence type="ECO:0007829" key="5">
    <source>
        <dbReference type="PDB" id="4NF2"/>
    </source>
</evidence>
<dbReference type="EC" id="2.1.3.3" evidence="1"/>
<dbReference type="EMBL" id="AE016879">
    <property type="protein sequence ID" value="AAP28069.1"/>
    <property type="molecule type" value="Genomic_DNA"/>
</dbReference>
<dbReference type="EMBL" id="AE017334">
    <property type="protein sequence ID" value="AAT33470.1"/>
    <property type="molecule type" value="Genomic_DNA"/>
</dbReference>
<dbReference type="EMBL" id="AE017225">
    <property type="protein sequence ID" value="AAT56337.1"/>
    <property type="molecule type" value="Genomic_DNA"/>
</dbReference>
<dbReference type="RefSeq" id="NP_846583.1">
    <property type="nucleotide sequence ID" value="NC_003997.3"/>
</dbReference>
<dbReference type="RefSeq" id="WP_000108878.1">
    <property type="nucleotide sequence ID" value="NZ_WXXJ01000027.1"/>
</dbReference>
<dbReference type="RefSeq" id="YP_030286.1">
    <property type="nucleotide sequence ID" value="NC_005945.1"/>
</dbReference>
<dbReference type="PDB" id="4EP1">
    <property type="method" value="X-ray"/>
    <property type="resolution" value="3.25 A"/>
    <property type="chains" value="A/B=1-316"/>
</dbReference>
<dbReference type="PDB" id="4NF2">
    <property type="method" value="X-ray"/>
    <property type="resolution" value="1.74 A"/>
    <property type="chains" value="A/B/C=1-316"/>
</dbReference>
<dbReference type="PDBsum" id="4EP1"/>
<dbReference type="PDBsum" id="4NF2"/>
<dbReference type="SMR" id="Q81M99"/>
<dbReference type="IntAct" id="Q81M99">
    <property type="interactions" value="1"/>
</dbReference>
<dbReference type="STRING" id="261594.GBAA_4351"/>
<dbReference type="DNASU" id="1087574"/>
<dbReference type="GeneID" id="45024016"/>
<dbReference type="KEGG" id="ban:BA_4351"/>
<dbReference type="KEGG" id="banh:HYU01_21245"/>
<dbReference type="KEGG" id="bar:GBAA_4351"/>
<dbReference type="KEGG" id="bat:BAS4036"/>
<dbReference type="PATRIC" id="fig|198094.11.peg.4319"/>
<dbReference type="eggNOG" id="COG0078">
    <property type="taxonomic scope" value="Bacteria"/>
</dbReference>
<dbReference type="HOGENOM" id="CLU_043846_3_2_9"/>
<dbReference type="OMA" id="VATDVWV"/>
<dbReference type="OrthoDB" id="9802587at2"/>
<dbReference type="UniPathway" id="UPA00068">
    <property type="reaction ID" value="UER00112"/>
</dbReference>
<dbReference type="EvolutionaryTrace" id="Q81M99"/>
<dbReference type="Proteomes" id="UP000000427">
    <property type="component" value="Chromosome"/>
</dbReference>
<dbReference type="Proteomes" id="UP000000594">
    <property type="component" value="Chromosome"/>
</dbReference>
<dbReference type="GO" id="GO:0005737">
    <property type="term" value="C:cytoplasm"/>
    <property type="evidence" value="ECO:0007669"/>
    <property type="project" value="UniProtKB-SubCell"/>
</dbReference>
<dbReference type="GO" id="GO:0016597">
    <property type="term" value="F:amino acid binding"/>
    <property type="evidence" value="ECO:0007669"/>
    <property type="project" value="InterPro"/>
</dbReference>
<dbReference type="GO" id="GO:0004585">
    <property type="term" value="F:ornithine carbamoyltransferase activity"/>
    <property type="evidence" value="ECO:0007669"/>
    <property type="project" value="UniProtKB-UniRule"/>
</dbReference>
<dbReference type="GO" id="GO:0042450">
    <property type="term" value="P:arginine biosynthetic process via ornithine"/>
    <property type="evidence" value="ECO:0007669"/>
    <property type="project" value="TreeGrafter"/>
</dbReference>
<dbReference type="GO" id="GO:0019240">
    <property type="term" value="P:citrulline biosynthetic process"/>
    <property type="evidence" value="ECO:0007669"/>
    <property type="project" value="TreeGrafter"/>
</dbReference>
<dbReference type="GO" id="GO:0006526">
    <property type="term" value="P:L-arginine biosynthetic process"/>
    <property type="evidence" value="ECO:0007669"/>
    <property type="project" value="UniProtKB-UniRule"/>
</dbReference>
<dbReference type="FunFam" id="3.40.50.1370:FF:000008">
    <property type="entry name" value="Ornithine carbamoyltransferase"/>
    <property type="match status" value="1"/>
</dbReference>
<dbReference type="FunFam" id="3.40.50.1370:FF:000016">
    <property type="entry name" value="Ornithine carbamoyltransferase"/>
    <property type="match status" value="1"/>
</dbReference>
<dbReference type="Gene3D" id="3.40.50.1370">
    <property type="entry name" value="Aspartate/ornithine carbamoyltransferase"/>
    <property type="match status" value="2"/>
</dbReference>
<dbReference type="HAMAP" id="MF_01109">
    <property type="entry name" value="OTCase"/>
    <property type="match status" value="1"/>
</dbReference>
<dbReference type="InterPro" id="IPR006132">
    <property type="entry name" value="Asp/Orn_carbamoyltranf_P-bd"/>
</dbReference>
<dbReference type="InterPro" id="IPR006130">
    <property type="entry name" value="Asp/Orn_carbamoylTrfase"/>
</dbReference>
<dbReference type="InterPro" id="IPR036901">
    <property type="entry name" value="Asp/Orn_carbamoylTrfase_sf"/>
</dbReference>
<dbReference type="InterPro" id="IPR006131">
    <property type="entry name" value="Asp_carbamoyltransf_Asp/Orn-bd"/>
</dbReference>
<dbReference type="InterPro" id="IPR002292">
    <property type="entry name" value="Orn/put_carbamltrans"/>
</dbReference>
<dbReference type="InterPro" id="IPR024904">
    <property type="entry name" value="OTCase_ArgI"/>
</dbReference>
<dbReference type="NCBIfam" id="TIGR00658">
    <property type="entry name" value="orni_carb_tr"/>
    <property type="match status" value="1"/>
</dbReference>
<dbReference type="NCBIfam" id="NF001986">
    <property type="entry name" value="PRK00779.1"/>
    <property type="match status" value="1"/>
</dbReference>
<dbReference type="PANTHER" id="PTHR45753">
    <property type="entry name" value="ORNITHINE CARBAMOYLTRANSFERASE, MITOCHONDRIAL"/>
    <property type="match status" value="1"/>
</dbReference>
<dbReference type="PANTHER" id="PTHR45753:SF3">
    <property type="entry name" value="ORNITHINE TRANSCARBAMYLASE, MITOCHONDRIAL"/>
    <property type="match status" value="1"/>
</dbReference>
<dbReference type="Pfam" id="PF00185">
    <property type="entry name" value="OTCace"/>
    <property type="match status" value="1"/>
</dbReference>
<dbReference type="Pfam" id="PF02729">
    <property type="entry name" value="OTCace_N"/>
    <property type="match status" value="1"/>
</dbReference>
<dbReference type="PRINTS" id="PR00100">
    <property type="entry name" value="AOTCASE"/>
</dbReference>
<dbReference type="PRINTS" id="PR00102">
    <property type="entry name" value="OTCASE"/>
</dbReference>
<dbReference type="SUPFAM" id="SSF53671">
    <property type="entry name" value="Aspartate/ornithine carbamoyltransferase"/>
    <property type="match status" value="1"/>
</dbReference>
<dbReference type="PROSITE" id="PS00097">
    <property type="entry name" value="CARBAMOYLTRANSFERASE"/>
    <property type="match status" value="1"/>
</dbReference>
<protein>
    <recommendedName>
        <fullName evidence="1">Ornithine carbamoyltransferase</fullName>
        <shortName evidence="1">OTCase</shortName>
        <ecNumber evidence="1">2.1.3.3</ecNumber>
    </recommendedName>
</protein>
<organism>
    <name type="scientific">Bacillus anthracis</name>
    <dbReference type="NCBI Taxonomy" id="1392"/>
    <lineage>
        <taxon>Bacteria</taxon>
        <taxon>Bacillati</taxon>
        <taxon>Bacillota</taxon>
        <taxon>Bacilli</taxon>
        <taxon>Bacillales</taxon>
        <taxon>Bacillaceae</taxon>
        <taxon>Bacillus</taxon>
        <taxon>Bacillus cereus group</taxon>
    </lineage>
</organism>
<reference key="1">
    <citation type="journal article" date="2003" name="Nature">
        <title>The genome sequence of Bacillus anthracis Ames and comparison to closely related bacteria.</title>
        <authorList>
            <person name="Read T.D."/>
            <person name="Peterson S.N."/>
            <person name="Tourasse N.J."/>
            <person name="Baillie L.W."/>
            <person name="Paulsen I.T."/>
            <person name="Nelson K.E."/>
            <person name="Tettelin H."/>
            <person name="Fouts D.E."/>
            <person name="Eisen J.A."/>
            <person name="Gill S.R."/>
            <person name="Holtzapple E.K."/>
            <person name="Okstad O.A."/>
            <person name="Helgason E."/>
            <person name="Rilstone J."/>
            <person name="Wu M."/>
            <person name="Kolonay J.F."/>
            <person name="Beanan M.J."/>
            <person name="Dodson R.J."/>
            <person name="Brinkac L.M."/>
            <person name="Gwinn M.L."/>
            <person name="DeBoy R.T."/>
            <person name="Madpu R."/>
            <person name="Daugherty S.C."/>
            <person name="Durkin A.S."/>
            <person name="Haft D.H."/>
            <person name="Nelson W.C."/>
            <person name="Peterson J.D."/>
            <person name="Pop M."/>
            <person name="Khouri H.M."/>
            <person name="Radune D."/>
            <person name="Benton J.L."/>
            <person name="Mahamoud Y."/>
            <person name="Jiang L."/>
            <person name="Hance I.R."/>
            <person name="Weidman J.F."/>
            <person name="Berry K.J."/>
            <person name="Plaut R.D."/>
            <person name="Wolf A.M."/>
            <person name="Watkins K.L."/>
            <person name="Nierman W.C."/>
            <person name="Hazen A."/>
            <person name="Cline R.T."/>
            <person name="Redmond C."/>
            <person name="Thwaite J.E."/>
            <person name="White O."/>
            <person name="Salzberg S.L."/>
            <person name="Thomason B."/>
            <person name="Friedlander A.M."/>
            <person name="Koehler T.M."/>
            <person name="Hanna P.C."/>
            <person name="Kolstoe A.-B."/>
            <person name="Fraser C.M."/>
        </authorList>
    </citation>
    <scope>NUCLEOTIDE SEQUENCE [LARGE SCALE GENOMIC DNA]</scope>
    <source>
        <strain>Ames / isolate Porton</strain>
    </source>
</reference>
<reference key="2">
    <citation type="journal article" date="2009" name="J. Bacteriol.">
        <title>The complete genome sequence of Bacillus anthracis Ames 'Ancestor'.</title>
        <authorList>
            <person name="Ravel J."/>
            <person name="Jiang L."/>
            <person name="Stanley S.T."/>
            <person name="Wilson M.R."/>
            <person name="Decker R.S."/>
            <person name="Read T.D."/>
            <person name="Worsham P."/>
            <person name="Keim P.S."/>
            <person name="Salzberg S.L."/>
            <person name="Fraser-Liggett C.M."/>
            <person name="Rasko D.A."/>
        </authorList>
    </citation>
    <scope>NUCLEOTIDE SEQUENCE [LARGE SCALE GENOMIC DNA]</scope>
    <source>
        <strain>Ames ancestor</strain>
    </source>
</reference>
<reference key="3">
    <citation type="submission" date="2004-01" db="EMBL/GenBank/DDBJ databases">
        <title>Complete genome sequence of Bacillus anthracis Sterne.</title>
        <authorList>
            <person name="Brettin T.S."/>
            <person name="Bruce D."/>
            <person name="Challacombe J.F."/>
            <person name="Gilna P."/>
            <person name="Han C."/>
            <person name="Hill K."/>
            <person name="Hitchcock P."/>
            <person name="Jackson P."/>
            <person name="Keim P."/>
            <person name="Longmire J."/>
            <person name="Lucas S."/>
            <person name="Okinaka R."/>
            <person name="Richardson P."/>
            <person name="Rubin E."/>
            <person name="Tice H."/>
        </authorList>
    </citation>
    <scope>NUCLEOTIDE SEQUENCE [LARGE SCALE GENOMIC DNA]</scope>
    <source>
        <strain>Sterne</strain>
    </source>
</reference>
<reference key="4">
    <citation type="submission" date="2012-04" db="PDB data bank">
        <title>Crystal structure of anabolic ornithine carbamoyltransferase from Bacillus anthracis.</title>
        <authorList>
            <consortium name="Center for structural genomics of infectious diseases (CSGID)"/>
            <person name="Shabalin I.G."/>
            <person name="Mikolajczak K."/>
            <person name="Stam J."/>
            <person name="Winsor J."/>
            <person name="Shuvalova L."/>
            <person name="Anderson W.F."/>
            <person name="Minor W."/>
        </authorList>
    </citation>
    <scope>X-RAY CRYSTALLOGRAPHY (3.25 ANGSTROMS)</scope>
</reference>
<reference key="5">
    <citation type="submission" date="2013-10" db="PDB data bank">
        <title>Crystal structures and kinetic properties of anabolic ornithine carbamoyltransferase from human pathogens Vibrio vulnificus and Bacillus anthracis.</title>
        <authorList>
            <person name="Shabalin I.G."/>
            <person name="Handing K."/>
            <person name="Cymborowski M.T."/>
            <person name="Stam J."/>
            <person name="Winsor J."/>
            <person name="Shuvalova L."/>
            <person name="Anderson W.F."/>
            <person name="Minor W."/>
        </authorList>
    </citation>
    <scope>X-RAY CRYSTALLOGRAPHY (1.74 ANGSTROMS) IN COMPLEX WITH CARBAMOYL PHOSPHATE AND SUBSTRATE ANALOG</scope>
    <scope>SUBUNIT</scope>
</reference>
<sequence length="316" mass="35305">MSTVQVPKLNTKDLLTLEELTQEEIISLIEFAIYLKKNKQEPLLQGKILGLIFDKHSTRTRVSFEAGMVQLGGHGMFLNGKEMQMGRGETVSDTAKVLSHYIDGIMIRTFSHADVEELAKESSIPVINGLTDDHHPCQALADLMTIYEETNTFKGIKLAYVGDGNNVCHSLLLASAKVGMHMTVATPVGYKPNEEIVKKALAIAKETGAEIEILHNPELAVNEADFIYTDVWMSMGQEGEEEKYTLFQPYQINKELVKHAKQTYHFLHCLPAHREEEVTGEIIDGPQSIVFEQAGNRLHAQKALLVSLFKNVEELS</sequence>
<gene>
    <name evidence="1" type="primary">argF</name>
    <name type="ordered locus">BA_4351</name>
    <name type="ordered locus">GBAA_4351</name>
    <name type="ordered locus">BAS4036</name>
</gene>
<keyword id="KW-0002">3D-structure</keyword>
<keyword id="KW-0028">Amino-acid biosynthesis</keyword>
<keyword id="KW-0055">Arginine biosynthesis</keyword>
<keyword id="KW-0963">Cytoplasm</keyword>
<keyword id="KW-1185">Reference proteome</keyword>
<keyword id="KW-0808">Transferase</keyword>